<gene>
    <name evidence="1" type="primary">rimO</name>
    <name type="ordered locus">BAB2_0674</name>
</gene>
<evidence type="ECO:0000255" key="1">
    <source>
        <dbReference type="HAMAP-Rule" id="MF_01865"/>
    </source>
</evidence>
<evidence type="ECO:0000255" key="2">
    <source>
        <dbReference type="PROSITE-ProRule" id="PRU01266"/>
    </source>
</evidence>
<protein>
    <recommendedName>
        <fullName evidence="1">Ribosomal protein uS12 methylthiotransferase RimO</fullName>
        <shortName evidence="1">uS12 MTTase</shortName>
        <shortName evidence="1">uS12 methylthiotransferase</shortName>
        <ecNumber evidence="1">2.8.4.4</ecNumber>
    </recommendedName>
    <alternativeName>
        <fullName evidence="1">Ribosomal protein uS12 (aspartate-C(3))-methylthiotransferase</fullName>
    </alternativeName>
    <alternativeName>
        <fullName evidence="1">Ribosome maturation factor RimO</fullName>
    </alternativeName>
</protein>
<reference key="1">
    <citation type="journal article" date="2005" name="Infect. Immun.">
        <title>Whole-genome analyses of speciation events in pathogenic Brucellae.</title>
        <authorList>
            <person name="Chain P.S."/>
            <person name="Comerci D.J."/>
            <person name="Tolmasky M.E."/>
            <person name="Larimer F.W."/>
            <person name="Malfatti S.A."/>
            <person name="Vergez L.M."/>
            <person name="Aguero F."/>
            <person name="Land M.L."/>
            <person name="Ugalde R.A."/>
            <person name="Garcia E."/>
        </authorList>
    </citation>
    <scope>NUCLEOTIDE SEQUENCE [LARGE SCALE GENOMIC DNA]</scope>
    <source>
        <strain>2308</strain>
    </source>
</reference>
<name>RIMO_BRUA2</name>
<sequence length="437" mass="48774">MSAPRVSFVSLGCPKALVDSERIITGLRSEGYEISRKHDGADLVIVNTCGFLDSARDESLEAIGLALNENGKVIVTGCLGAEPDVIRERHPNVLAITGPQAYESVMNAVHEVAPPAHDPFVDLVPPQGVKLTPRHYAYLKISEGCSNRCSFCIIPALRGDLVSRPINEVLREAEKLVQAGVKEILVISQDTSAYGLDIKYQEAMWQDRTVRTKFLDLSRELGEMGVWVRMHYVYPYPHVDEVIPLMAEGKILPYLDIPFQHASPAVLKNMRRPAHQEKTSRRIQAWRETCPDLAVRSTFIVGYPGETEEDFQMLLDWLDEAKIERAGCFKYEAVKGAKANDLGLEQVPEEVKEARWHRFMAKQQQISTNLLKKKVGKRLPVIIDEANGTIGKGRTRYDAPEIDGSVHISSRRPLRVGDIVTVKIEASDAYDLHGTAV</sequence>
<proteinExistence type="inferred from homology"/>
<comment type="function">
    <text evidence="1">Catalyzes the methylthiolation of an aspartic acid residue of ribosomal protein uS12.</text>
</comment>
<comment type="catalytic activity">
    <reaction evidence="1">
        <text>L-aspartate(89)-[ribosomal protein uS12]-hydrogen + (sulfur carrier)-SH + AH2 + 2 S-adenosyl-L-methionine = 3-methylsulfanyl-L-aspartate(89)-[ribosomal protein uS12]-hydrogen + (sulfur carrier)-H + 5'-deoxyadenosine + L-methionine + A + S-adenosyl-L-homocysteine + 2 H(+)</text>
        <dbReference type="Rhea" id="RHEA:37087"/>
        <dbReference type="Rhea" id="RHEA-COMP:10460"/>
        <dbReference type="Rhea" id="RHEA-COMP:10461"/>
        <dbReference type="Rhea" id="RHEA-COMP:14737"/>
        <dbReference type="Rhea" id="RHEA-COMP:14739"/>
        <dbReference type="ChEBI" id="CHEBI:13193"/>
        <dbReference type="ChEBI" id="CHEBI:15378"/>
        <dbReference type="ChEBI" id="CHEBI:17319"/>
        <dbReference type="ChEBI" id="CHEBI:17499"/>
        <dbReference type="ChEBI" id="CHEBI:29917"/>
        <dbReference type="ChEBI" id="CHEBI:29961"/>
        <dbReference type="ChEBI" id="CHEBI:57844"/>
        <dbReference type="ChEBI" id="CHEBI:57856"/>
        <dbReference type="ChEBI" id="CHEBI:59789"/>
        <dbReference type="ChEBI" id="CHEBI:64428"/>
        <dbReference type="ChEBI" id="CHEBI:73599"/>
        <dbReference type="EC" id="2.8.4.4"/>
    </reaction>
</comment>
<comment type="cofactor">
    <cofactor evidence="1">
        <name>[4Fe-4S] cluster</name>
        <dbReference type="ChEBI" id="CHEBI:49883"/>
    </cofactor>
    <text evidence="1">Binds 2 [4Fe-4S] clusters. One cluster is coordinated with 3 cysteines and an exchangeable S-adenosyl-L-methionine.</text>
</comment>
<comment type="subcellular location">
    <subcellularLocation>
        <location evidence="1">Cytoplasm</location>
    </subcellularLocation>
</comment>
<comment type="similarity">
    <text evidence="1">Belongs to the methylthiotransferase family. RimO subfamily.</text>
</comment>
<keyword id="KW-0004">4Fe-4S</keyword>
<keyword id="KW-0963">Cytoplasm</keyword>
<keyword id="KW-0408">Iron</keyword>
<keyword id="KW-0411">Iron-sulfur</keyword>
<keyword id="KW-0479">Metal-binding</keyword>
<keyword id="KW-1185">Reference proteome</keyword>
<keyword id="KW-0949">S-adenosyl-L-methionine</keyword>
<keyword id="KW-0808">Transferase</keyword>
<accession>Q2YKI5</accession>
<feature type="chain" id="PRO_0000374721" description="Ribosomal protein uS12 methylthiotransferase RimO">
    <location>
        <begin position="1"/>
        <end position="437"/>
    </location>
</feature>
<feature type="domain" description="MTTase N-terminal" evidence="1">
    <location>
        <begin position="4"/>
        <end position="114"/>
    </location>
</feature>
<feature type="domain" description="Radical SAM core" evidence="2">
    <location>
        <begin position="131"/>
        <end position="369"/>
    </location>
</feature>
<feature type="domain" description="TRAM" evidence="1">
    <location>
        <begin position="372"/>
        <end position="437"/>
    </location>
</feature>
<feature type="binding site" evidence="1">
    <location>
        <position position="13"/>
    </location>
    <ligand>
        <name>[4Fe-4S] cluster</name>
        <dbReference type="ChEBI" id="CHEBI:49883"/>
        <label>1</label>
    </ligand>
</feature>
<feature type="binding site" evidence="1">
    <location>
        <position position="49"/>
    </location>
    <ligand>
        <name>[4Fe-4S] cluster</name>
        <dbReference type="ChEBI" id="CHEBI:49883"/>
        <label>1</label>
    </ligand>
</feature>
<feature type="binding site" evidence="1">
    <location>
        <position position="78"/>
    </location>
    <ligand>
        <name>[4Fe-4S] cluster</name>
        <dbReference type="ChEBI" id="CHEBI:49883"/>
        <label>1</label>
    </ligand>
</feature>
<feature type="binding site" evidence="1">
    <location>
        <position position="145"/>
    </location>
    <ligand>
        <name>[4Fe-4S] cluster</name>
        <dbReference type="ChEBI" id="CHEBI:49883"/>
        <label>2</label>
        <note>4Fe-4S-S-AdoMet</note>
    </ligand>
</feature>
<feature type="binding site" evidence="1">
    <location>
        <position position="149"/>
    </location>
    <ligand>
        <name>[4Fe-4S] cluster</name>
        <dbReference type="ChEBI" id="CHEBI:49883"/>
        <label>2</label>
        <note>4Fe-4S-S-AdoMet</note>
    </ligand>
</feature>
<feature type="binding site" evidence="1">
    <location>
        <position position="152"/>
    </location>
    <ligand>
        <name>[4Fe-4S] cluster</name>
        <dbReference type="ChEBI" id="CHEBI:49883"/>
        <label>2</label>
        <note>4Fe-4S-S-AdoMet</note>
    </ligand>
</feature>
<dbReference type="EC" id="2.8.4.4" evidence="1"/>
<dbReference type="EMBL" id="AM040265">
    <property type="protein sequence ID" value="CAJ12840.1"/>
    <property type="molecule type" value="Genomic_DNA"/>
</dbReference>
<dbReference type="RefSeq" id="WP_002966068.1">
    <property type="nucleotide sequence ID" value="NZ_KN046823.1"/>
</dbReference>
<dbReference type="SMR" id="Q2YKI5"/>
<dbReference type="STRING" id="359391.BAB2_0674"/>
<dbReference type="GeneID" id="93015440"/>
<dbReference type="KEGG" id="bmf:BAB2_0674"/>
<dbReference type="PATRIC" id="fig|359391.11.peg.2858"/>
<dbReference type="HOGENOM" id="CLU_018697_0_0_5"/>
<dbReference type="PhylomeDB" id="Q2YKI5"/>
<dbReference type="Proteomes" id="UP000002719">
    <property type="component" value="Chromosome II"/>
</dbReference>
<dbReference type="GO" id="GO:0005829">
    <property type="term" value="C:cytosol"/>
    <property type="evidence" value="ECO:0007669"/>
    <property type="project" value="TreeGrafter"/>
</dbReference>
<dbReference type="GO" id="GO:0051539">
    <property type="term" value="F:4 iron, 4 sulfur cluster binding"/>
    <property type="evidence" value="ECO:0007669"/>
    <property type="project" value="UniProtKB-UniRule"/>
</dbReference>
<dbReference type="GO" id="GO:0035599">
    <property type="term" value="F:aspartic acid methylthiotransferase activity"/>
    <property type="evidence" value="ECO:0007669"/>
    <property type="project" value="TreeGrafter"/>
</dbReference>
<dbReference type="GO" id="GO:0046872">
    <property type="term" value="F:metal ion binding"/>
    <property type="evidence" value="ECO:0007669"/>
    <property type="project" value="UniProtKB-KW"/>
</dbReference>
<dbReference type="GO" id="GO:0103039">
    <property type="term" value="F:protein methylthiotransferase activity"/>
    <property type="evidence" value="ECO:0007669"/>
    <property type="project" value="UniProtKB-EC"/>
</dbReference>
<dbReference type="GO" id="GO:0006400">
    <property type="term" value="P:tRNA modification"/>
    <property type="evidence" value="ECO:0007669"/>
    <property type="project" value="InterPro"/>
</dbReference>
<dbReference type="CDD" id="cd01335">
    <property type="entry name" value="Radical_SAM"/>
    <property type="match status" value="1"/>
</dbReference>
<dbReference type="FunFam" id="3.40.50.12160:FF:000002">
    <property type="entry name" value="Ribosomal protein S12 methylthiotransferase RimO"/>
    <property type="match status" value="1"/>
</dbReference>
<dbReference type="FunFam" id="3.80.30.20:FF:000001">
    <property type="entry name" value="tRNA-2-methylthio-N(6)-dimethylallyladenosine synthase 2"/>
    <property type="match status" value="1"/>
</dbReference>
<dbReference type="Gene3D" id="3.40.50.12160">
    <property type="entry name" value="Methylthiotransferase, N-terminal domain"/>
    <property type="match status" value="1"/>
</dbReference>
<dbReference type="Gene3D" id="2.40.50.140">
    <property type="entry name" value="Nucleic acid-binding proteins"/>
    <property type="match status" value="1"/>
</dbReference>
<dbReference type="Gene3D" id="3.80.30.20">
    <property type="entry name" value="tm_1862 like domain"/>
    <property type="match status" value="1"/>
</dbReference>
<dbReference type="HAMAP" id="MF_01865">
    <property type="entry name" value="MTTase_RimO"/>
    <property type="match status" value="1"/>
</dbReference>
<dbReference type="InterPro" id="IPR006638">
    <property type="entry name" value="Elp3/MiaA/NifB-like_rSAM"/>
</dbReference>
<dbReference type="InterPro" id="IPR005839">
    <property type="entry name" value="Methylthiotransferase"/>
</dbReference>
<dbReference type="InterPro" id="IPR020612">
    <property type="entry name" value="Methylthiotransferase_CS"/>
</dbReference>
<dbReference type="InterPro" id="IPR013848">
    <property type="entry name" value="Methylthiotransferase_N"/>
</dbReference>
<dbReference type="InterPro" id="IPR038135">
    <property type="entry name" value="Methylthiotransferase_N_sf"/>
</dbReference>
<dbReference type="InterPro" id="IPR012340">
    <property type="entry name" value="NA-bd_OB-fold"/>
</dbReference>
<dbReference type="InterPro" id="IPR005840">
    <property type="entry name" value="Ribosomal_uS12_MeSTrfase_RimO"/>
</dbReference>
<dbReference type="InterPro" id="IPR007197">
    <property type="entry name" value="rSAM"/>
</dbReference>
<dbReference type="InterPro" id="IPR023404">
    <property type="entry name" value="rSAM_horseshoe"/>
</dbReference>
<dbReference type="InterPro" id="IPR002792">
    <property type="entry name" value="TRAM_dom"/>
</dbReference>
<dbReference type="NCBIfam" id="TIGR01125">
    <property type="entry name" value="30S ribosomal protein S12 methylthiotransferase RimO"/>
    <property type="match status" value="1"/>
</dbReference>
<dbReference type="NCBIfam" id="TIGR00089">
    <property type="entry name" value="MiaB/RimO family radical SAM methylthiotransferase"/>
    <property type="match status" value="1"/>
</dbReference>
<dbReference type="PANTHER" id="PTHR43837">
    <property type="entry name" value="RIBOSOMAL PROTEIN S12 METHYLTHIOTRANSFERASE RIMO"/>
    <property type="match status" value="1"/>
</dbReference>
<dbReference type="PANTHER" id="PTHR43837:SF1">
    <property type="entry name" value="RIBOSOMAL PROTEIN US12 METHYLTHIOTRANSFERASE RIMO"/>
    <property type="match status" value="1"/>
</dbReference>
<dbReference type="Pfam" id="PF04055">
    <property type="entry name" value="Radical_SAM"/>
    <property type="match status" value="1"/>
</dbReference>
<dbReference type="Pfam" id="PF18693">
    <property type="entry name" value="TRAM_2"/>
    <property type="match status" value="1"/>
</dbReference>
<dbReference type="Pfam" id="PF00919">
    <property type="entry name" value="UPF0004"/>
    <property type="match status" value="1"/>
</dbReference>
<dbReference type="SFLD" id="SFLDG01082">
    <property type="entry name" value="B12-binding_domain_containing"/>
    <property type="match status" value="1"/>
</dbReference>
<dbReference type="SFLD" id="SFLDG01061">
    <property type="entry name" value="methylthiotransferase"/>
    <property type="match status" value="1"/>
</dbReference>
<dbReference type="SFLD" id="SFLDF00274">
    <property type="entry name" value="ribosomal_protein_S12_methylth"/>
    <property type="match status" value="1"/>
</dbReference>
<dbReference type="SMART" id="SM00729">
    <property type="entry name" value="Elp3"/>
    <property type="match status" value="1"/>
</dbReference>
<dbReference type="SUPFAM" id="SSF102114">
    <property type="entry name" value="Radical SAM enzymes"/>
    <property type="match status" value="1"/>
</dbReference>
<dbReference type="PROSITE" id="PS51449">
    <property type="entry name" value="MTTASE_N"/>
    <property type="match status" value="1"/>
</dbReference>
<dbReference type="PROSITE" id="PS01278">
    <property type="entry name" value="MTTASE_RADICAL"/>
    <property type="match status" value="1"/>
</dbReference>
<dbReference type="PROSITE" id="PS51918">
    <property type="entry name" value="RADICAL_SAM"/>
    <property type="match status" value="1"/>
</dbReference>
<dbReference type="PROSITE" id="PS50926">
    <property type="entry name" value="TRAM"/>
    <property type="match status" value="1"/>
</dbReference>
<organism>
    <name type="scientific">Brucella abortus (strain 2308)</name>
    <dbReference type="NCBI Taxonomy" id="359391"/>
    <lineage>
        <taxon>Bacteria</taxon>
        <taxon>Pseudomonadati</taxon>
        <taxon>Pseudomonadota</taxon>
        <taxon>Alphaproteobacteria</taxon>
        <taxon>Hyphomicrobiales</taxon>
        <taxon>Brucellaceae</taxon>
        <taxon>Brucella/Ochrobactrum group</taxon>
        <taxon>Brucella</taxon>
    </lineage>
</organism>